<protein>
    <recommendedName>
        <fullName evidence="1">Putative manganese efflux pump MntP</fullName>
    </recommendedName>
</protein>
<reference key="1">
    <citation type="journal article" date="2003" name="Proc. Natl. Acad. Sci. U.S.A.">
        <title>The complete genome sequence of the Arabidopsis and tomato pathogen Pseudomonas syringae pv. tomato DC3000.</title>
        <authorList>
            <person name="Buell C.R."/>
            <person name="Joardar V."/>
            <person name="Lindeberg M."/>
            <person name="Selengut J."/>
            <person name="Paulsen I.T."/>
            <person name="Gwinn M.L."/>
            <person name="Dodson R.J."/>
            <person name="DeBoy R.T."/>
            <person name="Durkin A.S."/>
            <person name="Kolonay J.F."/>
            <person name="Madupu R."/>
            <person name="Daugherty S.C."/>
            <person name="Brinkac L.M."/>
            <person name="Beanan M.J."/>
            <person name="Haft D.H."/>
            <person name="Nelson W.C."/>
            <person name="Davidsen T.M."/>
            <person name="Zafar N."/>
            <person name="Zhou L."/>
            <person name="Liu J."/>
            <person name="Yuan Q."/>
            <person name="Khouri H.M."/>
            <person name="Fedorova N.B."/>
            <person name="Tran B."/>
            <person name="Russell D."/>
            <person name="Berry K.J."/>
            <person name="Utterback T.R."/>
            <person name="Van Aken S.E."/>
            <person name="Feldblyum T.V."/>
            <person name="D'Ascenzo M."/>
            <person name="Deng W.-L."/>
            <person name="Ramos A.R."/>
            <person name="Alfano J.R."/>
            <person name="Cartinhour S."/>
            <person name="Chatterjee A.K."/>
            <person name="Delaney T.P."/>
            <person name="Lazarowitz S.G."/>
            <person name="Martin G.B."/>
            <person name="Schneider D.J."/>
            <person name="Tang X."/>
            <person name="Bender C.L."/>
            <person name="White O."/>
            <person name="Fraser C.M."/>
            <person name="Collmer A."/>
        </authorList>
    </citation>
    <scope>NUCLEOTIDE SEQUENCE [LARGE SCALE GENOMIC DNA]</scope>
    <source>
        <strain>ATCC BAA-871 / DC3000</strain>
    </source>
</reference>
<gene>
    <name evidence="1" type="primary">mntP</name>
    <name type="ordered locus">PSPTO_3755</name>
</gene>
<comment type="function">
    <text evidence="1">Probably functions as a manganese efflux pump.</text>
</comment>
<comment type="subcellular location">
    <subcellularLocation>
        <location evidence="1">Cell inner membrane</location>
        <topology evidence="1">Multi-pass membrane protein</topology>
    </subcellularLocation>
</comment>
<comment type="similarity">
    <text evidence="1">Belongs to the MntP (TC 9.B.29) family.</text>
</comment>
<sequence length="190" mass="20061">MNPISLLFLALAMSTDAFAAALGKGASLHKPRFIEALRTGLIFGAIETITPVIGWGIGQVAARFAESWDHWIAFTLLLVLGLHMIYNGLKHDHEEEQEKPGSHSFWILAVTAFATSIDALAVGVGLAFVDVNIMVAALAIGLATTVMVTIGVMLGRVLGTMVGKRAEIVGGIVLIVVGTTILYEHLTAAA</sequence>
<proteinExistence type="inferred from homology"/>
<organism>
    <name type="scientific">Pseudomonas syringae pv. tomato (strain ATCC BAA-871 / DC3000)</name>
    <dbReference type="NCBI Taxonomy" id="223283"/>
    <lineage>
        <taxon>Bacteria</taxon>
        <taxon>Pseudomonadati</taxon>
        <taxon>Pseudomonadota</taxon>
        <taxon>Gammaproteobacteria</taxon>
        <taxon>Pseudomonadales</taxon>
        <taxon>Pseudomonadaceae</taxon>
        <taxon>Pseudomonas</taxon>
    </lineage>
</organism>
<dbReference type="EMBL" id="AE016853">
    <property type="protein sequence ID" value="AAO57224.1"/>
    <property type="molecule type" value="Genomic_DNA"/>
</dbReference>
<dbReference type="RefSeq" id="NP_793529.1">
    <property type="nucleotide sequence ID" value="NC_004578.1"/>
</dbReference>
<dbReference type="RefSeq" id="WP_005769175.1">
    <property type="nucleotide sequence ID" value="NC_004578.1"/>
</dbReference>
<dbReference type="GeneID" id="1185423"/>
<dbReference type="KEGG" id="pst:PSPTO_3755"/>
<dbReference type="PATRIC" id="fig|223283.9.peg.3850"/>
<dbReference type="eggNOG" id="COG1971">
    <property type="taxonomic scope" value="Bacteria"/>
</dbReference>
<dbReference type="HOGENOM" id="CLU_096410_0_0_6"/>
<dbReference type="OrthoDB" id="9811590at2"/>
<dbReference type="PhylomeDB" id="Q87YP0"/>
<dbReference type="Proteomes" id="UP000002515">
    <property type="component" value="Chromosome"/>
</dbReference>
<dbReference type="GO" id="GO:0005886">
    <property type="term" value="C:plasma membrane"/>
    <property type="evidence" value="ECO:0007669"/>
    <property type="project" value="UniProtKB-SubCell"/>
</dbReference>
<dbReference type="GO" id="GO:0005384">
    <property type="term" value="F:manganese ion transmembrane transporter activity"/>
    <property type="evidence" value="ECO:0007669"/>
    <property type="project" value="UniProtKB-UniRule"/>
</dbReference>
<dbReference type="HAMAP" id="MF_01521">
    <property type="entry name" value="MntP_pump"/>
    <property type="match status" value="1"/>
</dbReference>
<dbReference type="InterPro" id="IPR003810">
    <property type="entry name" value="Mntp/YtaF"/>
</dbReference>
<dbReference type="InterPro" id="IPR022929">
    <property type="entry name" value="Put_MntP"/>
</dbReference>
<dbReference type="NCBIfam" id="NF008546">
    <property type="entry name" value="PRK11469.1"/>
    <property type="match status" value="1"/>
</dbReference>
<dbReference type="PANTHER" id="PTHR35529">
    <property type="entry name" value="MANGANESE EFFLUX PUMP MNTP-RELATED"/>
    <property type="match status" value="1"/>
</dbReference>
<dbReference type="PANTHER" id="PTHR35529:SF1">
    <property type="entry name" value="MANGANESE EFFLUX PUMP MNTP-RELATED"/>
    <property type="match status" value="1"/>
</dbReference>
<dbReference type="Pfam" id="PF02659">
    <property type="entry name" value="Mntp"/>
    <property type="match status" value="1"/>
</dbReference>
<name>MNTP_PSESM</name>
<keyword id="KW-0997">Cell inner membrane</keyword>
<keyword id="KW-1003">Cell membrane</keyword>
<keyword id="KW-0406">Ion transport</keyword>
<keyword id="KW-0464">Manganese</keyword>
<keyword id="KW-0472">Membrane</keyword>
<keyword id="KW-1185">Reference proteome</keyword>
<keyword id="KW-0812">Transmembrane</keyword>
<keyword id="KW-1133">Transmembrane helix</keyword>
<keyword id="KW-0813">Transport</keyword>
<accession>Q87YP0</accession>
<evidence type="ECO:0000255" key="1">
    <source>
        <dbReference type="HAMAP-Rule" id="MF_01521"/>
    </source>
</evidence>
<feature type="chain" id="PRO_0000155662" description="Putative manganese efflux pump MntP">
    <location>
        <begin position="1"/>
        <end position="190"/>
    </location>
</feature>
<feature type="transmembrane region" description="Helical" evidence="1">
    <location>
        <begin position="3"/>
        <end position="23"/>
    </location>
</feature>
<feature type="transmembrane region" description="Helical" evidence="1">
    <location>
        <begin position="41"/>
        <end position="61"/>
    </location>
</feature>
<feature type="transmembrane region" description="Helical" evidence="1">
    <location>
        <begin position="69"/>
        <end position="89"/>
    </location>
</feature>
<feature type="transmembrane region" description="Helical" evidence="1">
    <location>
        <begin position="105"/>
        <end position="125"/>
    </location>
</feature>
<feature type="transmembrane region" description="Helical" evidence="1">
    <location>
        <begin position="133"/>
        <end position="153"/>
    </location>
</feature>
<feature type="transmembrane region" description="Helical" evidence="1">
    <location>
        <begin position="168"/>
        <end position="188"/>
    </location>
</feature>